<protein>
    <recommendedName>
        <fullName>CASP-like protein 1B1</fullName>
        <shortName>PtCASPL1B1</shortName>
    </recommendedName>
</protein>
<reference key="1">
    <citation type="journal article" date="2006" name="Science">
        <title>The genome of black cottonwood, Populus trichocarpa (Torr. &amp; Gray).</title>
        <authorList>
            <person name="Tuskan G.A."/>
            <person name="Difazio S."/>
            <person name="Jansson S."/>
            <person name="Bohlmann J."/>
            <person name="Grigoriev I."/>
            <person name="Hellsten U."/>
            <person name="Putnam N."/>
            <person name="Ralph S."/>
            <person name="Rombauts S."/>
            <person name="Salamov A."/>
            <person name="Schein J."/>
            <person name="Sterck L."/>
            <person name="Aerts A."/>
            <person name="Bhalerao R.R."/>
            <person name="Bhalerao R.P."/>
            <person name="Blaudez D."/>
            <person name="Boerjan W."/>
            <person name="Brun A."/>
            <person name="Brunner A."/>
            <person name="Busov V."/>
            <person name="Campbell M."/>
            <person name="Carlson J."/>
            <person name="Chalot M."/>
            <person name="Chapman J."/>
            <person name="Chen G.-L."/>
            <person name="Cooper D."/>
            <person name="Coutinho P.M."/>
            <person name="Couturier J."/>
            <person name="Covert S."/>
            <person name="Cronk Q."/>
            <person name="Cunningham R."/>
            <person name="Davis J."/>
            <person name="Degroeve S."/>
            <person name="Dejardin A."/>
            <person name="dePamphilis C.W."/>
            <person name="Detter J."/>
            <person name="Dirks B."/>
            <person name="Dubchak I."/>
            <person name="Duplessis S."/>
            <person name="Ehlting J."/>
            <person name="Ellis B."/>
            <person name="Gendler K."/>
            <person name="Goodstein D."/>
            <person name="Gribskov M."/>
            <person name="Grimwood J."/>
            <person name="Groover A."/>
            <person name="Gunter L."/>
            <person name="Hamberger B."/>
            <person name="Heinze B."/>
            <person name="Helariutta Y."/>
            <person name="Henrissat B."/>
            <person name="Holligan D."/>
            <person name="Holt R."/>
            <person name="Huang W."/>
            <person name="Islam-Faridi N."/>
            <person name="Jones S."/>
            <person name="Jones-Rhoades M."/>
            <person name="Jorgensen R."/>
            <person name="Joshi C."/>
            <person name="Kangasjaervi J."/>
            <person name="Karlsson J."/>
            <person name="Kelleher C."/>
            <person name="Kirkpatrick R."/>
            <person name="Kirst M."/>
            <person name="Kohler A."/>
            <person name="Kalluri U."/>
            <person name="Larimer F."/>
            <person name="Leebens-Mack J."/>
            <person name="Leple J.-C."/>
            <person name="Locascio P."/>
            <person name="Lou Y."/>
            <person name="Lucas S."/>
            <person name="Martin F."/>
            <person name="Montanini B."/>
            <person name="Napoli C."/>
            <person name="Nelson D.R."/>
            <person name="Nelson C."/>
            <person name="Nieminen K."/>
            <person name="Nilsson O."/>
            <person name="Pereda V."/>
            <person name="Peter G."/>
            <person name="Philippe R."/>
            <person name="Pilate G."/>
            <person name="Poliakov A."/>
            <person name="Razumovskaya J."/>
            <person name="Richardson P."/>
            <person name="Rinaldi C."/>
            <person name="Ritland K."/>
            <person name="Rouze P."/>
            <person name="Ryaboy D."/>
            <person name="Schmutz J."/>
            <person name="Schrader J."/>
            <person name="Segerman B."/>
            <person name="Shin H."/>
            <person name="Siddiqui A."/>
            <person name="Sterky F."/>
            <person name="Terry A."/>
            <person name="Tsai C.-J."/>
            <person name="Uberbacher E."/>
            <person name="Unneberg P."/>
            <person name="Vahala J."/>
            <person name="Wall K."/>
            <person name="Wessler S."/>
            <person name="Yang G."/>
            <person name="Yin T."/>
            <person name="Douglas C."/>
            <person name="Marra M."/>
            <person name="Sandberg G."/>
            <person name="Van de Peer Y."/>
            <person name="Rokhsar D.S."/>
        </authorList>
    </citation>
    <scope>NUCLEOTIDE SEQUENCE [LARGE SCALE GENOMIC DNA]</scope>
    <source>
        <strain>cv. Nisqually</strain>
    </source>
</reference>
<reference key="2">
    <citation type="submission" date="2008-12" db="EMBL/GenBank/DDBJ databases">
        <authorList>
            <consortium name="US DOE Joint Genome Institute (JGI-PGF)"/>
            <person name="Grigoriev I.V."/>
            <person name="Terry A."/>
            <person name="Salamov A.A."/>
            <person name="Otillar R."/>
            <person name="Lou Y."/>
            <person name="Lucas S."/>
            <person name="Hammon N."/>
            <person name="Glavina del Rio T."/>
            <person name="Detter J."/>
            <person name="Kalin E."/>
            <person name="Tice H."/>
            <person name="Pitluck S."/>
            <person name="Chapman J."/>
            <person name="Putnam N.H."/>
            <person name="Brunner A."/>
            <person name="Busov V."/>
            <person name="Campbell M."/>
            <person name="Chalot M."/>
            <person name="Covert S."/>
            <person name="Davis J."/>
            <person name="DiFazio S."/>
            <person name="Gribskov M."/>
            <person name="Gunter L."/>
            <person name="Hamberger B."/>
            <person name="Jansson S."/>
            <person name="Joshi C."/>
            <person name="Larimer F."/>
            <person name="Martin F."/>
            <person name="Napoli C."/>
            <person name="Nelson D."/>
            <person name="Ralph S."/>
            <person name="Rombauts S."/>
            <person name="Rouze P."/>
            <person name="Schrader J."/>
            <person name="Tsai C."/>
            <person name="Vahala J."/>
            <person name="Tuskan G."/>
            <person name="Rokhsar D."/>
        </authorList>
    </citation>
    <scope>GENOME REANNOTATION</scope>
    <source>
        <strain>cv. Nisqually</strain>
    </source>
</reference>
<reference key="3">
    <citation type="journal article" date="2014" name="Plant Physiol.">
        <title>Functional and evolutionary analysis of the CASPARIAN STRIP MEMBRANE DOMAIN PROTEIN family.</title>
        <authorList>
            <person name="Roppolo D."/>
            <person name="Boeckmann B."/>
            <person name="Pfister A."/>
            <person name="Boutet E."/>
            <person name="Rubio M.C."/>
            <person name="Denervaud-Tendon V."/>
            <person name="Vermeer J.E."/>
            <person name="Gheyselinck J."/>
            <person name="Xenarios I."/>
            <person name="Geldner N."/>
        </authorList>
    </citation>
    <scope>GENE FAMILY</scope>
    <scope>NOMENCLATURE</scope>
</reference>
<dbReference type="EMBL" id="CM009300">
    <property type="protein sequence ID" value="EEE97679.1"/>
    <property type="molecule type" value="Genomic_DNA"/>
</dbReference>
<dbReference type="RefSeq" id="XP_002317067.1">
    <property type="nucleotide sequence ID" value="XM_002317031.2"/>
</dbReference>
<dbReference type="FunCoup" id="B9I0U9">
    <property type="interactions" value="634"/>
</dbReference>
<dbReference type="STRING" id="3694.B9I0U9"/>
<dbReference type="EnsemblPlants" id="Potri.011G154900.1.v4.1">
    <property type="protein sequence ID" value="Potri.011G154900.1.v4.1"/>
    <property type="gene ID" value="Potri.011G154900.v4.1"/>
</dbReference>
<dbReference type="Gramene" id="Potri.011G154900.1.v4.1">
    <property type="protein sequence ID" value="Potri.011G154900.1.v4.1"/>
    <property type="gene ID" value="Potri.011G154900.v4.1"/>
</dbReference>
<dbReference type="KEGG" id="pop:7489095"/>
<dbReference type="eggNOG" id="ENOG502RYH6">
    <property type="taxonomic scope" value="Eukaryota"/>
</dbReference>
<dbReference type="HOGENOM" id="CLU_066104_1_0_1"/>
<dbReference type="InParanoid" id="B9I0U9"/>
<dbReference type="OMA" id="IEAKYHY"/>
<dbReference type="OrthoDB" id="610574at2759"/>
<dbReference type="Proteomes" id="UP000006729">
    <property type="component" value="Chromosome 11"/>
</dbReference>
<dbReference type="ExpressionAtlas" id="B9I0U9">
    <property type="expression patterns" value="differential"/>
</dbReference>
<dbReference type="GO" id="GO:0005886">
    <property type="term" value="C:plasma membrane"/>
    <property type="evidence" value="ECO:0000318"/>
    <property type="project" value="GO_Central"/>
</dbReference>
<dbReference type="InterPro" id="IPR006459">
    <property type="entry name" value="CASP/CASPL"/>
</dbReference>
<dbReference type="InterPro" id="IPR006702">
    <property type="entry name" value="CASP_dom"/>
</dbReference>
<dbReference type="InterPro" id="IPR044173">
    <property type="entry name" value="CASPL"/>
</dbReference>
<dbReference type="NCBIfam" id="TIGR01569">
    <property type="entry name" value="A_tha_TIGR01569"/>
    <property type="match status" value="1"/>
</dbReference>
<dbReference type="PANTHER" id="PTHR36488">
    <property type="entry name" value="CASP-LIKE PROTEIN 1U1"/>
    <property type="match status" value="1"/>
</dbReference>
<dbReference type="PANTHER" id="PTHR36488:SF8">
    <property type="entry name" value="CASP-LIKE PROTEIN 1U1"/>
    <property type="match status" value="1"/>
</dbReference>
<dbReference type="Pfam" id="PF04535">
    <property type="entry name" value="CASP_dom"/>
    <property type="match status" value="1"/>
</dbReference>
<evidence type="ECO:0000250" key="1"/>
<evidence type="ECO:0000255" key="2"/>
<evidence type="ECO:0000305" key="3"/>
<proteinExistence type="inferred from homology"/>
<sequence>MGLQNEEKLELGCTGLQPKPKKWVLLMVRVVAFLATAAATLVMALNKETKTLVVATVGNTPIKVTLTAKFQHTPAFVFFVIANGMASFHNLLMIMVELCGQKLDYKGMRLAMVAILDMMTVALVSGGASAATFMAELGKNGNSHARWDKICDKFETFCDHGGAALIASSAGLILMMIISVMSIMKLLIKPKSDSS</sequence>
<keyword id="KW-1003">Cell membrane</keyword>
<keyword id="KW-0472">Membrane</keyword>
<keyword id="KW-1185">Reference proteome</keyword>
<keyword id="KW-0812">Transmembrane</keyword>
<keyword id="KW-1133">Transmembrane helix</keyword>
<comment type="subunit">
    <text evidence="1">Homodimer and heterodimers.</text>
</comment>
<comment type="subcellular location">
    <subcellularLocation>
        <location evidence="1">Cell membrane</location>
        <topology evidence="1">Multi-pass membrane protein</topology>
    </subcellularLocation>
</comment>
<comment type="similarity">
    <text evidence="3">Belongs to the Casparian strip membrane proteins (CASP) family.</text>
</comment>
<organism>
    <name type="scientific">Populus trichocarpa</name>
    <name type="common">Western balsam poplar</name>
    <name type="synonym">Populus balsamifera subsp. trichocarpa</name>
    <dbReference type="NCBI Taxonomy" id="3694"/>
    <lineage>
        <taxon>Eukaryota</taxon>
        <taxon>Viridiplantae</taxon>
        <taxon>Streptophyta</taxon>
        <taxon>Embryophyta</taxon>
        <taxon>Tracheophyta</taxon>
        <taxon>Spermatophyta</taxon>
        <taxon>Magnoliopsida</taxon>
        <taxon>eudicotyledons</taxon>
        <taxon>Gunneridae</taxon>
        <taxon>Pentapetalae</taxon>
        <taxon>rosids</taxon>
        <taxon>fabids</taxon>
        <taxon>Malpighiales</taxon>
        <taxon>Salicaceae</taxon>
        <taxon>Saliceae</taxon>
        <taxon>Populus</taxon>
    </lineage>
</organism>
<gene>
    <name type="ORF">POPTRDRAFT_823125</name>
</gene>
<accession>B9I0U9</accession>
<feature type="chain" id="PRO_0000412042" description="CASP-like protein 1B1">
    <location>
        <begin position="1"/>
        <end position="195"/>
    </location>
</feature>
<feature type="topological domain" description="Cytoplasmic" evidence="2">
    <location>
        <begin position="1"/>
        <end position="22"/>
    </location>
</feature>
<feature type="transmembrane region" description="Helical" evidence="2">
    <location>
        <begin position="23"/>
        <end position="43"/>
    </location>
</feature>
<feature type="topological domain" description="Extracellular" evidence="2">
    <location>
        <begin position="44"/>
        <end position="75"/>
    </location>
</feature>
<feature type="transmembrane region" description="Helical" evidence="2">
    <location>
        <begin position="76"/>
        <end position="96"/>
    </location>
</feature>
<feature type="topological domain" description="Cytoplasmic" evidence="2">
    <location>
        <begin position="97"/>
        <end position="109"/>
    </location>
</feature>
<feature type="transmembrane region" description="Helical" evidence="2">
    <location>
        <begin position="110"/>
        <end position="130"/>
    </location>
</feature>
<feature type="topological domain" description="Extracellular" evidence="2">
    <location>
        <begin position="131"/>
        <end position="163"/>
    </location>
</feature>
<feature type="transmembrane region" description="Helical" evidence="2">
    <location>
        <begin position="164"/>
        <end position="184"/>
    </location>
</feature>
<feature type="topological domain" description="Cytoplasmic" evidence="2">
    <location>
        <begin position="185"/>
        <end position="195"/>
    </location>
</feature>
<name>CSPLB_POPTR</name>